<sequence>MPVIPPEKLVSLQKNQENIRNFTLLAHVDHGKTTLADSLLASNGIISSKLAGTVRFLDFREDEITRGITMKSSAISLFFKVISQNDEKRVEKDYLINLIDSPGHVDFSSEVSSASRLCDGAFVLVDAVEGVCSQTITVLRQAWIDRIKVILVINKMDRLITELKLSPIEAHYHLLRLVEQVNAVIGTFYTGELMQLADNDEVISDEGIYFAPEQGNVVFASAYDGWAFCLDQFSEFYEKKLGLKQKALTKCLWGDYYLDPKTKRVLQPKHLQGRRLKPMFVQFVLENLWAVYESAVSNRNLENIEKIIKALNIKVLPRDIKSKDPRNLLLAIFQQWLPLSTAILLTAIREIPSPINAQANRARKVLSSTPHYEMIDPDITLAMESCDASKEQPVLVYISKMVAFSERDLPNHRRKQLSAEEMKLIRSKLSESIESGINTISIEENVSSTNSDNLEGSTTDMDDDKDILIGFARIYSGTISVGQEVYVYGPKYDPVNPEKHITKVTVESLYLMMGQELVYLETVPAGNVFAIGGLAGTVLRTATLCSSPNGPNLVGVTQQMEPIVRVALEPVRPFEMNKLVTGLDMLNQADPCVQIAVEENGEHVIMCAGEIHLERCLKDLRERFAKIEIQASQPLVPYRETTIATPDLLAKNKELSIGFVTATLPVGGVTIGITVTPLSGSVVDFLLKHSKTIENVSSNFSKKNRNVVVSESLTKSMEEVLTPEKFYERLSKLLEEENSDLGELKNHLDSIIAFGPKRVGPNILFDKTKKMRDFRRQSDETKLIPSDLSEYVVTAFQLITHQGPLCAEPVQGICVSIDQFDISDDSEDSKLLTINNPQIPGQVISVVKESIRHGFLGWSPRLMLAMYSCDVQATSEVLGRVYGVVSKRRGRVIDEEMKEGTPFFIVKALIPVVESFGFAVEILKRTSGAAYPQLIFHGFEMLDENPFWVPTTEEELEDLGELADRENIAKRYMLNVRKRKGLLVEQKIVEKAEKQRTLKH</sequence>
<proteinExistence type="inferred from homology"/>
<evidence type="ECO:0000250" key="1"/>
<evidence type="ECO:0000255" key="2">
    <source>
        <dbReference type="PROSITE-ProRule" id="PRU01059"/>
    </source>
</evidence>
<evidence type="ECO:0000269" key="3">
    <source>
    </source>
</evidence>
<protein>
    <recommendedName>
        <fullName>Ribosome assembly protein 1</fullName>
        <ecNumber>3.6.5.-</ecNumber>
    </recommendedName>
    <alternativeName>
        <fullName>EF-2 like GTPase</fullName>
    </alternativeName>
    <alternativeName>
        <fullName>Elongation factor-like 1</fullName>
    </alternativeName>
</protein>
<gene>
    <name type="primary">ria1</name>
    <name type="ORF">SPCC553.08c</name>
</gene>
<name>RIA1_SCHPO</name>
<keyword id="KW-0963">Cytoplasm</keyword>
<keyword id="KW-0342">GTP-binding</keyword>
<keyword id="KW-0378">Hydrolase</keyword>
<keyword id="KW-0547">Nucleotide-binding</keyword>
<keyword id="KW-1185">Reference proteome</keyword>
<keyword id="KW-0690">Ribosome biogenesis</keyword>
<dbReference type="EC" id="3.6.5.-"/>
<dbReference type="EMBL" id="CU329672">
    <property type="protein sequence ID" value="CAA19260.1"/>
    <property type="molecule type" value="Genomic_DNA"/>
</dbReference>
<dbReference type="PIR" id="T41396">
    <property type="entry name" value="T41396"/>
</dbReference>
<dbReference type="RefSeq" id="NP_587766.1">
    <property type="nucleotide sequence ID" value="NM_001022759.2"/>
</dbReference>
<dbReference type="SMR" id="O74945"/>
<dbReference type="BioGRID" id="275861">
    <property type="interactions" value="30"/>
</dbReference>
<dbReference type="FunCoup" id="O74945">
    <property type="interactions" value="509"/>
</dbReference>
<dbReference type="STRING" id="284812.O74945"/>
<dbReference type="PaxDb" id="4896-SPCC553.08c.1"/>
<dbReference type="EnsemblFungi" id="SPCC553.08c.1">
    <property type="protein sequence ID" value="SPCC553.08c.1:pep"/>
    <property type="gene ID" value="SPCC553.08c"/>
</dbReference>
<dbReference type="GeneID" id="2539293"/>
<dbReference type="KEGG" id="spo:2539293"/>
<dbReference type="PomBase" id="SPCC553.08c">
    <property type="gene designation" value="ria1"/>
</dbReference>
<dbReference type="VEuPathDB" id="FungiDB:SPCC553.08c"/>
<dbReference type="eggNOG" id="KOG0467">
    <property type="taxonomic scope" value="Eukaryota"/>
</dbReference>
<dbReference type="HOGENOM" id="CLU_002794_3_1_1"/>
<dbReference type="InParanoid" id="O74945"/>
<dbReference type="OMA" id="FARCDIQ"/>
<dbReference type="PhylomeDB" id="O74945"/>
<dbReference type="PRO" id="PR:O74945"/>
<dbReference type="Proteomes" id="UP000002485">
    <property type="component" value="Chromosome III"/>
</dbReference>
<dbReference type="GO" id="GO:0005829">
    <property type="term" value="C:cytosol"/>
    <property type="evidence" value="ECO:0007005"/>
    <property type="project" value="PomBase"/>
</dbReference>
<dbReference type="GO" id="GO:1990904">
    <property type="term" value="C:ribonucleoprotein complex"/>
    <property type="evidence" value="ECO:0000318"/>
    <property type="project" value="GO_Central"/>
</dbReference>
<dbReference type="GO" id="GO:0005525">
    <property type="term" value="F:GTP binding"/>
    <property type="evidence" value="ECO:0000255"/>
    <property type="project" value="PomBase"/>
</dbReference>
<dbReference type="GO" id="GO:0003924">
    <property type="term" value="F:GTPase activity"/>
    <property type="evidence" value="ECO:0000318"/>
    <property type="project" value="GO_Central"/>
</dbReference>
<dbReference type="GO" id="GO:0043022">
    <property type="term" value="F:ribosome binding"/>
    <property type="evidence" value="ECO:0000318"/>
    <property type="project" value="GO_Central"/>
</dbReference>
<dbReference type="GO" id="GO:0042256">
    <property type="term" value="P:cytosolic ribosome assembly"/>
    <property type="evidence" value="ECO:0000318"/>
    <property type="project" value="GO_Central"/>
</dbReference>
<dbReference type="GO" id="GO:0042254">
    <property type="term" value="P:ribosome biogenesis"/>
    <property type="evidence" value="ECO:0000266"/>
    <property type="project" value="PomBase"/>
</dbReference>
<dbReference type="CDD" id="cd01681">
    <property type="entry name" value="aeEF2_snRNP_like_IV"/>
    <property type="match status" value="1"/>
</dbReference>
<dbReference type="CDD" id="cd04096">
    <property type="entry name" value="eEF2_snRNP_like_C"/>
    <property type="match status" value="1"/>
</dbReference>
<dbReference type="CDD" id="cd01885">
    <property type="entry name" value="EF2"/>
    <property type="match status" value="1"/>
</dbReference>
<dbReference type="CDD" id="cd16268">
    <property type="entry name" value="EF2_II"/>
    <property type="match status" value="1"/>
</dbReference>
<dbReference type="CDD" id="cd16261">
    <property type="entry name" value="EF2_snRNP_III"/>
    <property type="match status" value="1"/>
</dbReference>
<dbReference type="FunFam" id="3.30.70.240:FF:000006">
    <property type="entry name" value="Elongation factor like GTPase 1"/>
    <property type="match status" value="1"/>
</dbReference>
<dbReference type="FunFam" id="3.90.1430.10:FF:000002">
    <property type="entry name" value="Elongation factor like GTPase 1"/>
    <property type="match status" value="1"/>
</dbReference>
<dbReference type="FunFam" id="3.40.50.300:FF:000746">
    <property type="entry name" value="Ribosome assembly protein 1"/>
    <property type="match status" value="1"/>
</dbReference>
<dbReference type="FunFam" id="3.30.70.870:FF:000002">
    <property type="entry name" value="Translation elongation factor 2"/>
    <property type="match status" value="1"/>
</dbReference>
<dbReference type="Gene3D" id="3.30.230.10">
    <property type="match status" value="1"/>
</dbReference>
<dbReference type="Gene3D" id="3.30.70.240">
    <property type="match status" value="1"/>
</dbReference>
<dbReference type="Gene3D" id="3.30.70.870">
    <property type="entry name" value="Elongation Factor G (Translational Gtpase), domain 3"/>
    <property type="match status" value="1"/>
</dbReference>
<dbReference type="Gene3D" id="3.40.50.300">
    <property type="entry name" value="P-loop containing nucleotide triphosphate hydrolases"/>
    <property type="match status" value="1"/>
</dbReference>
<dbReference type="Gene3D" id="2.40.30.10">
    <property type="entry name" value="Translation factors"/>
    <property type="match status" value="1"/>
</dbReference>
<dbReference type="InterPro" id="IPR041095">
    <property type="entry name" value="EFG_II"/>
</dbReference>
<dbReference type="InterPro" id="IPR035647">
    <property type="entry name" value="EFG_III/V"/>
</dbReference>
<dbReference type="InterPro" id="IPR000640">
    <property type="entry name" value="EFG_V-like"/>
</dbReference>
<dbReference type="InterPro" id="IPR056752">
    <property type="entry name" value="EFL1"/>
</dbReference>
<dbReference type="InterPro" id="IPR027417">
    <property type="entry name" value="P-loop_NTPase"/>
</dbReference>
<dbReference type="InterPro" id="IPR020568">
    <property type="entry name" value="Ribosomal_Su5_D2-typ_SF"/>
</dbReference>
<dbReference type="InterPro" id="IPR014721">
    <property type="entry name" value="Ribsml_uS5_D2-typ_fold_subgr"/>
</dbReference>
<dbReference type="InterPro" id="IPR005225">
    <property type="entry name" value="Small_GTP-bd"/>
</dbReference>
<dbReference type="InterPro" id="IPR000795">
    <property type="entry name" value="T_Tr_GTP-bd_dom"/>
</dbReference>
<dbReference type="InterPro" id="IPR009000">
    <property type="entry name" value="Transl_B-barrel_sf"/>
</dbReference>
<dbReference type="NCBIfam" id="TIGR00231">
    <property type="entry name" value="small_GTP"/>
    <property type="match status" value="1"/>
</dbReference>
<dbReference type="PANTHER" id="PTHR42908:SF3">
    <property type="entry name" value="ELONGATION FACTOR-LIKE GTPASE 1"/>
    <property type="match status" value="1"/>
</dbReference>
<dbReference type="PANTHER" id="PTHR42908">
    <property type="entry name" value="TRANSLATION ELONGATION FACTOR-RELATED"/>
    <property type="match status" value="1"/>
</dbReference>
<dbReference type="Pfam" id="PF00679">
    <property type="entry name" value="EFG_C"/>
    <property type="match status" value="1"/>
</dbReference>
<dbReference type="Pfam" id="PF14492">
    <property type="entry name" value="EFG_III"/>
    <property type="match status" value="1"/>
</dbReference>
<dbReference type="Pfam" id="PF25118">
    <property type="entry name" value="EFL1"/>
    <property type="match status" value="1"/>
</dbReference>
<dbReference type="Pfam" id="PF00009">
    <property type="entry name" value="GTP_EFTU"/>
    <property type="match status" value="1"/>
</dbReference>
<dbReference type="PRINTS" id="PR00315">
    <property type="entry name" value="ELONGATNFCT"/>
</dbReference>
<dbReference type="SMART" id="SM00838">
    <property type="entry name" value="EFG_C"/>
    <property type="match status" value="1"/>
</dbReference>
<dbReference type="SUPFAM" id="SSF54980">
    <property type="entry name" value="EF-G C-terminal domain-like"/>
    <property type="match status" value="2"/>
</dbReference>
<dbReference type="SUPFAM" id="SSF52540">
    <property type="entry name" value="P-loop containing nucleoside triphosphate hydrolases"/>
    <property type="match status" value="1"/>
</dbReference>
<dbReference type="SUPFAM" id="SSF54211">
    <property type="entry name" value="Ribosomal protein S5 domain 2-like"/>
    <property type="match status" value="1"/>
</dbReference>
<dbReference type="SUPFAM" id="SSF50447">
    <property type="entry name" value="Translation proteins"/>
    <property type="match status" value="1"/>
</dbReference>
<dbReference type="PROSITE" id="PS51722">
    <property type="entry name" value="G_TR_2"/>
    <property type="match status" value="1"/>
</dbReference>
<accession>O74945</accession>
<comment type="function">
    <text evidence="1">GTPase involved in the biogenesis of the 60S ribosomal subunit and translational activation of ribosomes. Together with sdo1, may trigger the GTP-dependent release of tif6 from 60S pre-ribosomes in the cytoplasm, thereby activating ribosomes for translation competence by allowing 80S ribosome assembly and facilitating tif6 recycling to the nucleus, where it is required for 60S rRNA processing and nuclear export. Inhibits GTPase activity of ribosome-bound EF-2 (By similarity).</text>
</comment>
<comment type="catalytic activity">
    <reaction>
        <text>GTP + H2O = GDP + phosphate + H(+)</text>
        <dbReference type="Rhea" id="RHEA:19669"/>
        <dbReference type="ChEBI" id="CHEBI:15377"/>
        <dbReference type="ChEBI" id="CHEBI:15378"/>
        <dbReference type="ChEBI" id="CHEBI:37565"/>
        <dbReference type="ChEBI" id="CHEBI:43474"/>
        <dbReference type="ChEBI" id="CHEBI:58189"/>
    </reaction>
</comment>
<comment type="activity regulation">
    <text evidence="1">GTPase activity is stimulated in the presence of 60S subunits.</text>
</comment>
<comment type="subcellular location">
    <subcellularLocation>
        <location evidence="3">Cytoplasm</location>
    </subcellularLocation>
</comment>
<comment type="similarity">
    <text evidence="2">Belongs to the TRAFAC class translation factor GTPase superfamily. Classic translation factor GTPase family.</text>
</comment>
<feature type="chain" id="PRO_0000315632" description="Ribosome assembly protein 1">
    <location>
        <begin position="1"/>
        <end position="1000"/>
    </location>
</feature>
<feature type="domain" description="tr-type G" evidence="2">
    <location>
        <begin position="17"/>
        <end position="246"/>
    </location>
</feature>
<feature type="binding site" evidence="1">
    <location>
        <begin position="26"/>
        <end position="33"/>
    </location>
    <ligand>
        <name>GTP</name>
        <dbReference type="ChEBI" id="CHEBI:37565"/>
    </ligand>
</feature>
<feature type="binding site" evidence="1">
    <location>
        <begin position="100"/>
        <end position="104"/>
    </location>
    <ligand>
        <name>GTP</name>
        <dbReference type="ChEBI" id="CHEBI:37565"/>
    </ligand>
</feature>
<feature type="binding site" evidence="1">
    <location>
        <begin position="154"/>
        <end position="157"/>
    </location>
    <ligand>
        <name>GTP</name>
        <dbReference type="ChEBI" id="CHEBI:37565"/>
    </ligand>
</feature>
<reference key="1">
    <citation type="journal article" date="2002" name="Nature">
        <title>The genome sequence of Schizosaccharomyces pombe.</title>
        <authorList>
            <person name="Wood V."/>
            <person name="Gwilliam R."/>
            <person name="Rajandream M.A."/>
            <person name="Lyne M.H."/>
            <person name="Lyne R."/>
            <person name="Stewart A."/>
            <person name="Sgouros J.G."/>
            <person name="Peat N."/>
            <person name="Hayles J."/>
            <person name="Baker S.G."/>
            <person name="Basham D."/>
            <person name="Bowman S."/>
            <person name="Brooks K."/>
            <person name="Brown D."/>
            <person name="Brown S."/>
            <person name="Chillingworth T."/>
            <person name="Churcher C.M."/>
            <person name="Collins M."/>
            <person name="Connor R."/>
            <person name="Cronin A."/>
            <person name="Davis P."/>
            <person name="Feltwell T."/>
            <person name="Fraser A."/>
            <person name="Gentles S."/>
            <person name="Goble A."/>
            <person name="Hamlin N."/>
            <person name="Harris D.E."/>
            <person name="Hidalgo J."/>
            <person name="Hodgson G."/>
            <person name="Holroyd S."/>
            <person name="Hornsby T."/>
            <person name="Howarth S."/>
            <person name="Huckle E.J."/>
            <person name="Hunt S."/>
            <person name="Jagels K."/>
            <person name="James K.D."/>
            <person name="Jones L."/>
            <person name="Jones M."/>
            <person name="Leather S."/>
            <person name="McDonald S."/>
            <person name="McLean J."/>
            <person name="Mooney P."/>
            <person name="Moule S."/>
            <person name="Mungall K.L."/>
            <person name="Murphy L.D."/>
            <person name="Niblett D."/>
            <person name="Odell C."/>
            <person name="Oliver K."/>
            <person name="O'Neil S."/>
            <person name="Pearson D."/>
            <person name="Quail M.A."/>
            <person name="Rabbinowitsch E."/>
            <person name="Rutherford K.M."/>
            <person name="Rutter S."/>
            <person name="Saunders D."/>
            <person name="Seeger K."/>
            <person name="Sharp S."/>
            <person name="Skelton J."/>
            <person name="Simmonds M.N."/>
            <person name="Squares R."/>
            <person name="Squares S."/>
            <person name="Stevens K."/>
            <person name="Taylor K."/>
            <person name="Taylor R.G."/>
            <person name="Tivey A."/>
            <person name="Walsh S.V."/>
            <person name="Warren T."/>
            <person name="Whitehead S."/>
            <person name="Woodward J.R."/>
            <person name="Volckaert G."/>
            <person name="Aert R."/>
            <person name="Robben J."/>
            <person name="Grymonprez B."/>
            <person name="Weltjens I."/>
            <person name="Vanstreels E."/>
            <person name="Rieger M."/>
            <person name="Schaefer M."/>
            <person name="Mueller-Auer S."/>
            <person name="Gabel C."/>
            <person name="Fuchs M."/>
            <person name="Duesterhoeft A."/>
            <person name="Fritzc C."/>
            <person name="Holzer E."/>
            <person name="Moestl D."/>
            <person name="Hilbert H."/>
            <person name="Borzym K."/>
            <person name="Langer I."/>
            <person name="Beck A."/>
            <person name="Lehrach H."/>
            <person name="Reinhardt R."/>
            <person name="Pohl T.M."/>
            <person name="Eger P."/>
            <person name="Zimmermann W."/>
            <person name="Wedler H."/>
            <person name="Wambutt R."/>
            <person name="Purnelle B."/>
            <person name="Goffeau A."/>
            <person name="Cadieu E."/>
            <person name="Dreano S."/>
            <person name="Gloux S."/>
            <person name="Lelaure V."/>
            <person name="Mottier S."/>
            <person name="Galibert F."/>
            <person name="Aves S.J."/>
            <person name="Xiang Z."/>
            <person name="Hunt C."/>
            <person name="Moore K."/>
            <person name="Hurst S.M."/>
            <person name="Lucas M."/>
            <person name="Rochet M."/>
            <person name="Gaillardin C."/>
            <person name="Tallada V.A."/>
            <person name="Garzon A."/>
            <person name="Thode G."/>
            <person name="Daga R.R."/>
            <person name="Cruzado L."/>
            <person name="Jimenez J."/>
            <person name="Sanchez M."/>
            <person name="del Rey F."/>
            <person name="Benito J."/>
            <person name="Dominguez A."/>
            <person name="Revuelta J.L."/>
            <person name="Moreno S."/>
            <person name="Armstrong J."/>
            <person name="Forsburg S.L."/>
            <person name="Cerutti L."/>
            <person name="Lowe T."/>
            <person name="McCombie W.R."/>
            <person name="Paulsen I."/>
            <person name="Potashkin J."/>
            <person name="Shpakovski G.V."/>
            <person name="Ussery D."/>
            <person name="Barrell B.G."/>
            <person name="Nurse P."/>
        </authorList>
    </citation>
    <scope>NUCLEOTIDE SEQUENCE [LARGE SCALE GENOMIC DNA]</scope>
    <source>
        <strain>972 / ATCC 24843</strain>
    </source>
</reference>
<reference key="2">
    <citation type="journal article" date="2006" name="Nat. Biotechnol.">
        <title>ORFeome cloning and global analysis of protein localization in the fission yeast Schizosaccharomyces pombe.</title>
        <authorList>
            <person name="Matsuyama A."/>
            <person name="Arai R."/>
            <person name="Yashiroda Y."/>
            <person name="Shirai A."/>
            <person name="Kamata A."/>
            <person name="Sekido S."/>
            <person name="Kobayashi Y."/>
            <person name="Hashimoto A."/>
            <person name="Hamamoto M."/>
            <person name="Hiraoka Y."/>
            <person name="Horinouchi S."/>
            <person name="Yoshida M."/>
        </authorList>
    </citation>
    <scope>SUBCELLULAR LOCATION [LARGE SCALE ANALYSIS]</scope>
</reference>
<organism>
    <name type="scientific">Schizosaccharomyces pombe (strain 972 / ATCC 24843)</name>
    <name type="common">Fission yeast</name>
    <dbReference type="NCBI Taxonomy" id="284812"/>
    <lineage>
        <taxon>Eukaryota</taxon>
        <taxon>Fungi</taxon>
        <taxon>Dikarya</taxon>
        <taxon>Ascomycota</taxon>
        <taxon>Taphrinomycotina</taxon>
        <taxon>Schizosaccharomycetes</taxon>
        <taxon>Schizosaccharomycetales</taxon>
        <taxon>Schizosaccharomycetaceae</taxon>
        <taxon>Schizosaccharomyces</taxon>
    </lineage>
</organism>